<name>NUSB_CHLAD</name>
<feature type="chain" id="PRO_1000192424" description="Transcription antitermination protein NusB">
    <location>
        <begin position="1"/>
        <end position="150"/>
    </location>
</feature>
<keyword id="KW-0694">RNA-binding</keyword>
<keyword id="KW-0804">Transcription</keyword>
<keyword id="KW-0889">Transcription antitermination</keyword>
<keyword id="KW-0805">Transcription regulation</keyword>
<organism>
    <name type="scientific">Chloroflexus aggregans (strain MD-66 / DSM 9485)</name>
    <dbReference type="NCBI Taxonomy" id="326427"/>
    <lineage>
        <taxon>Bacteria</taxon>
        <taxon>Bacillati</taxon>
        <taxon>Chloroflexota</taxon>
        <taxon>Chloroflexia</taxon>
        <taxon>Chloroflexales</taxon>
        <taxon>Chloroflexineae</taxon>
        <taxon>Chloroflexaceae</taxon>
        <taxon>Chloroflexus</taxon>
    </lineage>
</organism>
<comment type="function">
    <text evidence="1">Involved in transcription antitermination. Required for transcription of ribosomal RNA (rRNA) genes. Binds specifically to the boxA antiterminator sequence of the ribosomal RNA (rrn) operons.</text>
</comment>
<comment type="similarity">
    <text evidence="1">Belongs to the NusB family.</text>
</comment>
<dbReference type="EMBL" id="CP001337">
    <property type="protein sequence ID" value="ACL23231.1"/>
    <property type="molecule type" value="Genomic_DNA"/>
</dbReference>
<dbReference type="RefSeq" id="WP_012615597.1">
    <property type="nucleotide sequence ID" value="NC_011831.1"/>
</dbReference>
<dbReference type="SMR" id="B8G2S7"/>
<dbReference type="STRING" id="326427.Cagg_0283"/>
<dbReference type="KEGG" id="cag:Cagg_0283"/>
<dbReference type="eggNOG" id="COG0781">
    <property type="taxonomic scope" value="Bacteria"/>
</dbReference>
<dbReference type="HOGENOM" id="CLU_087843_3_2_0"/>
<dbReference type="Proteomes" id="UP000002508">
    <property type="component" value="Chromosome"/>
</dbReference>
<dbReference type="GO" id="GO:0005829">
    <property type="term" value="C:cytosol"/>
    <property type="evidence" value="ECO:0007669"/>
    <property type="project" value="TreeGrafter"/>
</dbReference>
<dbReference type="GO" id="GO:0003723">
    <property type="term" value="F:RNA binding"/>
    <property type="evidence" value="ECO:0007669"/>
    <property type="project" value="UniProtKB-UniRule"/>
</dbReference>
<dbReference type="GO" id="GO:0006353">
    <property type="term" value="P:DNA-templated transcription termination"/>
    <property type="evidence" value="ECO:0007669"/>
    <property type="project" value="UniProtKB-UniRule"/>
</dbReference>
<dbReference type="GO" id="GO:0031564">
    <property type="term" value="P:transcription antitermination"/>
    <property type="evidence" value="ECO:0007669"/>
    <property type="project" value="UniProtKB-KW"/>
</dbReference>
<dbReference type="Gene3D" id="1.10.940.10">
    <property type="entry name" value="NusB-like"/>
    <property type="match status" value="1"/>
</dbReference>
<dbReference type="HAMAP" id="MF_00073">
    <property type="entry name" value="NusB"/>
    <property type="match status" value="1"/>
</dbReference>
<dbReference type="InterPro" id="IPR035926">
    <property type="entry name" value="NusB-like_sf"/>
</dbReference>
<dbReference type="InterPro" id="IPR011605">
    <property type="entry name" value="NusB_fam"/>
</dbReference>
<dbReference type="InterPro" id="IPR006027">
    <property type="entry name" value="NusB_RsmB_TIM44"/>
</dbReference>
<dbReference type="NCBIfam" id="TIGR01951">
    <property type="entry name" value="nusB"/>
    <property type="match status" value="1"/>
</dbReference>
<dbReference type="PANTHER" id="PTHR11078:SF3">
    <property type="entry name" value="ANTITERMINATION NUSB DOMAIN-CONTAINING PROTEIN"/>
    <property type="match status" value="1"/>
</dbReference>
<dbReference type="PANTHER" id="PTHR11078">
    <property type="entry name" value="N UTILIZATION SUBSTANCE PROTEIN B-RELATED"/>
    <property type="match status" value="1"/>
</dbReference>
<dbReference type="Pfam" id="PF01029">
    <property type="entry name" value="NusB"/>
    <property type="match status" value="1"/>
</dbReference>
<dbReference type="SUPFAM" id="SSF48013">
    <property type="entry name" value="NusB-like"/>
    <property type="match status" value="1"/>
</dbReference>
<sequence length="150" mass="17144">MGRVRLASQRHRVRIAALQILFEVDETDHAIDQVLERRLTDEPMSAESAEFLRRLVFGTWEHRSYLDRIIEEAAPNWPVNQMPGVDKAVLRIALFELLIDEVEKTPIKAVINEAVELAKEFGSDNSSRFVNGVLGTVVTRYLAEREANEE</sequence>
<protein>
    <recommendedName>
        <fullName evidence="1">Transcription antitermination protein NusB</fullName>
    </recommendedName>
    <alternativeName>
        <fullName evidence="1">Antitermination factor NusB</fullName>
    </alternativeName>
</protein>
<gene>
    <name evidence="1" type="primary">nusB</name>
    <name type="ordered locus">Cagg_0283</name>
</gene>
<evidence type="ECO:0000255" key="1">
    <source>
        <dbReference type="HAMAP-Rule" id="MF_00073"/>
    </source>
</evidence>
<accession>B8G2S7</accession>
<reference key="1">
    <citation type="submission" date="2008-12" db="EMBL/GenBank/DDBJ databases">
        <title>Complete sequence of Chloroflexus aggregans DSM 9485.</title>
        <authorList>
            <consortium name="US DOE Joint Genome Institute"/>
            <person name="Lucas S."/>
            <person name="Copeland A."/>
            <person name="Lapidus A."/>
            <person name="Glavina del Rio T."/>
            <person name="Dalin E."/>
            <person name="Tice H."/>
            <person name="Pitluck S."/>
            <person name="Foster B."/>
            <person name="Larimer F."/>
            <person name="Land M."/>
            <person name="Hauser L."/>
            <person name="Kyrpides N."/>
            <person name="Mikhailova N."/>
            <person name="Bryant D.A."/>
            <person name="Richardson P."/>
        </authorList>
    </citation>
    <scope>NUCLEOTIDE SEQUENCE [LARGE SCALE GENOMIC DNA]</scope>
    <source>
        <strain>MD-66 / DSM 9485</strain>
    </source>
</reference>
<proteinExistence type="inferred from homology"/>